<evidence type="ECO:0000255" key="1">
    <source>
        <dbReference type="HAMAP-Rule" id="MF_01152"/>
    </source>
</evidence>
<evidence type="ECO:0000256" key="2">
    <source>
        <dbReference type="SAM" id="MobiDB-lite"/>
    </source>
</evidence>
<dbReference type="EMBL" id="CP000264">
    <property type="protein sequence ID" value="ABD53128.1"/>
    <property type="molecule type" value="Genomic_DNA"/>
</dbReference>
<dbReference type="RefSeq" id="WP_011453337.1">
    <property type="nucleotide sequence ID" value="NC_007802.1"/>
</dbReference>
<dbReference type="SMR" id="Q28VY4"/>
<dbReference type="STRING" id="290400.Jann_0211"/>
<dbReference type="KEGG" id="jan:Jann_0211"/>
<dbReference type="eggNOG" id="COG0484">
    <property type="taxonomic scope" value="Bacteria"/>
</dbReference>
<dbReference type="HOGENOM" id="CLU_017633_0_7_5"/>
<dbReference type="OrthoDB" id="9779889at2"/>
<dbReference type="Proteomes" id="UP000008326">
    <property type="component" value="Chromosome"/>
</dbReference>
<dbReference type="GO" id="GO:0005737">
    <property type="term" value="C:cytoplasm"/>
    <property type="evidence" value="ECO:0007669"/>
    <property type="project" value="UniProtKB-SubCell"/>
</dbReference>
<dbReference type="GO" id="GO:0005524">
    <property type="term" value="F:ATP binding"/>
    <property type="evidence" value="ECO:0007669"/>
    <property type="project" value="InterPro"/>
</dbReference>
<dbReference type="GO" id="GO:0031072">
    <property type="term" value="F:heat shock protein binding"/>
    <property type="evidence" value="ECO:0007669"/>
    <property type="project" value="InterPro"/>
</dbReference>
<dbReference type="GO" id="GO:0051082">
    <property type="term" value="F:unfolded protein binding"/>
    <property type="evidence" value="ECO:0007669"/>
    <property type="project" value="UniProtKB-UniRule"/>
</dbReference>
<dbReference type="GO" id="GO:0008270">
    <property type="term" value="F:zinc ion binding"/>
    <property type="evidence" value="ECO:0007669"/>
    <property type="project" value="UniProtKB-UniRule"/>
</dbReference>
<dbReference type="GO" id="GO:0051085">
    <property type="term" value="P:chaperone cofactor-dependent protein refolding"/>
    <property type="evidence" value="ECO:0007669"/>
    <property type="project" value="TreeGrafter"/>
</dbReference>
<dbReference type="GO" id="GO:0006260">
    <property type="term" value="P:DNA replication"/>
    <property type="evidence" value="ECO:0007669"/>
    <property type="project" value="UniProtKB-KW"/>
</dbReference>
<dbReference type="GO" id="GO:0042026">
    <property type="term" value="P:protein refolding"/>
    <property type="evidence" value="ECO:0007669"/>
    <property type="project" value="TreeGrafter"/>
</dbReference>
<dbReference type="GO" id="GO:0009408">
    <property type="term" value="P:response to heat"/>
    <property type="evidence" value="ECO:0007669"/>
    <property type="project" value="InterPro"/>
</dbReference>
<dbReference type="CDD" id="cd06257">
    <property type="entry name" value="DnaJ"/>
    <property type="match status" value="1"/>
</dbReference>
<dbReference type="CDD" id="cd10747">
    <property type="entry name" value="DnaJ_C"/>
    <property type="match status" value="1"/>
</dbReference>
<dbReference type="CDD" id="cd10719">
    <property type="entry name" value="DnaJ_zf"/>
    <property type="match status" value="1"/>
</dbReference>
<dbReference type="FunFam" id="2.10.230.10:FF:000002">
    <property type="entry name" value="Molecular chaperone DnaJ"/>
    <property type="match status" value="1"/>
</dbReference>
<dbReference type="FunFam" id="2.60.260.20:FF:000004">
    <property type="entry name" value="Molecular chaperone DnaJ"/>
    <property type="match status" value="1"/>
</dbReference>
<dbReference type="Gene3D" id="1.10.287.110">
    <property type="entry name" value="DnaJ domain"/>
    <property type="match status" value="1"/>
</dbReference>
<dbReference type="Gene3D" id="2.10.230.10">
    <property type="entry name" value="Heat shock protein DnaJ, cysteine-rich domain"/>
    <property type="match status" value="1"/>
</dbReference>
<dbReference type="Gene3D" id="2.60.260.20">
    <property type="entry name" value="Urease metallochaperone UreE, N-terminal domain"/>
    <property type="match status" value="2"/>
</dbReference>
<dbReference type="HAMAP" id="MF_01152">
    <property type="entry name" value="DnaJ"/>
    <property type="match status" value="1"/>
</dbReference>
<dbReference type="InterPro" id="IPR012724">
    <property type="entry name" value="DnaJ"/>
</dbReference>
<dbReference type="InterPro" id="IPR002939">
    <property type="entry name" value="DnaJ_C"/>
</dbReference>
<dbReference type="InterPro" id="IPR001623">
    <property type="entry name" value="DnaJ_domain"/>
</dbReference>
<dbReference type="InterPro" id="IPR018253">
    <property type="entry name" value="DnaJ_domain_CS"/>
</dbReference>
<dbReference type="InterPro" id="IPR008971">
    <property type="entry name" value="HSP40/DnaJ_pept-bd"/>
</dbReference>
<dbReference type="InterPro" id="IPR001305">
    <property type="entry name" value="HSP_DnaJ_Cys-rich_dom"/>
</dbReference>
<dbReference type="InterPro" id="IPR036410">
    <property type="entry name" value="HSP_DnaJ_Cys-rich_dom_sf"/>
</dbReference>
<dbReference type="InterPro" id="IPR036869">
    <property type="entry name" value="J_dom_sf"/>
</dbReference>
<dbReference type="NCBIfam" id="TIGR02349">
    <property type="entry name" value="DnaJ_bact"/>
    <property type="match status" value="1"/>
</dbReference>
<dbReference type="NCBIfam" id="NF008035">
    <property type="entry name" value="PRK10767.1"/>
    <property type="match status" value="1"/>
</dbReference>
<dbReference type="PANTHER" id="PTHR43096:SF48">
    <property type="entry name" value="CHAPERONE PROTEIN DNAJ"/>
    <property type="match status" value="1"/>
</dbReference>
<dbReference type="PANTHER" id="PTHR43096">
    <property type="entry name" value="DNAJ HOMOLOG 1, MITOCHONDRIAL-RELATED"/>
    <property type="match status" value="1"/>
</dbReference>
<dbReference type="Pfam" id="PF00226">
    <property type="entry name" value="DnaJ"/>
    <property type="match status" value="1"/>
</dbReference>
<dbReference type="Pfam" id="PF01556">
    <property type="entry name" value="DnaJ_C"/>
    <property type="match status" value="1"/>
</dbReference>
<dbReference type="Pfam" id="PF00684">
    <property type="entry name" value="DnaJ_CXXCXGXG"/>
    <property type="match status" value="1"/>
</dbReference>
<dbReference type="PRINTS" id="PR00625">
    <property type="entry name" value="JDOMAIN"/>
</dbReference>
<dbReference type="SMART" id="SM00271">
    <property type="entry name" value="DnaJ"/>
    <property type="match status" value="1"/>
</dbReference>
<dbReference type="SUPFAM" id="SSF46565">
    <property type="entry name" value="Chaperone J-domain"/>
    <property type="match status" value="1"/>
</dbReference>
<dbReference type="SUPFAM" id="SSF57938">
    <property type="entry name" value="DnaJ/Hsp40 cysteine-rich domain"/>
    <property type="match status" value="1"/>
</dbReference>
<dbReference type="SUPFAM" id="SSF49493">
    <property type="entry name" value="HSP40/DnaJ peptide-binding domain"/>
    <property type="match status" value="2"/>
</dbReference>
<dbReference type="PROSITE" id="PS00636">
    <property type="entry name" value="DNAJ_1"/>
    <property type="match status" value="1"/>
</dbReference>
<dbReference type="PROSITE" id="PS50076">
    <property type="entry name" value="DNAJ_2"/>
    <property type="match status" value="1"/>
</dbReference>
<dbReference type="PROSITE" id="PS51188">
    <property type="entry name" value="ZF_CR"/>
    <property type="match status" value="1"/>
</dbReference>
<keyword id="KW-0143">Chaperone</keyword>
<keyword id="KW-0963">Cytoplasm</keyword>
<keyword id="KW-0235">DNA replication</keyword>
<keyword id="KW-0479">Metal-binding</keyword>
<keyword id="KW-1185">Reference proteome</keyword>
<keyword id="KW-0677">Repeat</keyword>
<keyword id="KW-0346">Stress response</keyword>
<keyword id="KW-0862">Zinc</keyword>
<keyword id="KW-0863">Zinc-finger</keyword>
<feature type="chain" id="PRO_1000085211" description="Chaperone protein DnaJ">
    <location>
        <begin position="1"/>
        <end position="385"/>
    </location>
</feature>
<feature type="domain" description="J" evidence="1">
    <location>
        <begin position="5"/>
        <end position="70"/>
    </location>
</feature>
<feature type="repeat" description="CXXCXGXG motif">
    <location>
        <begin position="156"/>
        <end position="163"/>
    </location>
</feature>
<feature type="repeat" description="CXXCXGXG motif">
    <location>
        <begin position="173"/>
        <end position="180"/>
    </location>
</feature>
<feature type="repeat" description="CXXCXGXG motif">
    <location>
        <begin position="195"/>
        <end position="202"/>
    </location>
</feature>
<feature type="repeat" description="CXXCXGXG motif">
    <location>
        <begin position="209"/>
        <end position="216"/>
    </location>
</feature>
<feature type="zinc finger region" description="CR-type" evidence="1">
    <location>
        <begin position="143"/>
        <end position="221"/>
    </location>
</feature>
<feature type="region of interest" description="Disordered" evidence="2">
    <location>
        <begin position="299"/>
        <end position="323"/>
    </location>
</feature>
<feature type="binding site" evidence="1">
    <location>
        <position position="156"/>
    </location>
    <ligand>
        <name>Zn(2+)</name>
        <dbReference type="ChEBI" id="CHEBI:29105"/>
        <label>1</label>
    </ligand>
</feature>
<feature type="binding site" evidence="1">
    <location>
        <position position="159"/>
    </location>
    <ligand>
        <name>Zn(2+)</name>
        <dbReference type="ChEBI" id="CHEBI:29105"/>
        <label>1</label>
    </ligand>
</feature>
<feature type="binding site" evidence="1">
    <location>
        <position position="173"/>
    </location>
    <ligand>
        <name>Zn(2+)</name>
        <dbReference type="ChEBI" id="CHEBI:29105"/>
        <label>2</label>
    </ligand>
</feature>
<feature type="binding site" evidence="1">
    <location>
        <position position="176"/>
    </location>
    <ligand>
        <name>Zn(2+)</name>
        <dbReference type="ChEBI" id="CHEBI:29105"/>
        <label>2</label>
    </ligand>
</feature>
<feature type="binding site" evidence="1">
    <location>
        <position position="195"/>
    </location>
    <ligand>
        <name>Zn(2+)</name>
        <dbReference type="ChEBI" id="CHEBI:29105"/>
        <label>2</label>
    </ligand>
</feature>
<feature type="binding site" evidence="1">
    <location>
        <position position="198"/>
    </location>
    <ligand>
        <name>Zn(2+)</name>
        <dbReference type="ChEBI" id="CHEBI:29105"/>
        <label>2</label>
    </ligand>
</feature>
<feature type="binding site" evidence="1">
    <location>
        <position position="209"/>
    </location>
    <ligand>
        <name>Zn(2+)</name>
        <dbReference type="ChEBI" id="CHEBI:29105"/>
        <label>1</label>
    </ligand>
</feature>
<feature type="binding site" evidence="1">
    <location>
        <position position="212"/>
    </location>
    <ligand>
        <name>Zn(2+)</name>
        <dbReference type="ChEBI" id="CHEBI:29105"/>
        <label>1</label>
    </ligand>
</feature>
<proteinExistence type="inferred from homology"/>
<name>DNAJ_JANSC</name>
<protein>
    <recommendedName>
        <fullName evidence="1">Chaperone protein DnaJ</fullName>
    </recommendedName>
</protein>
<accession>Q28VY4</accession>
<gene>
    <name evidence="1" type="primary">dnaJ</name>
    <name type="ordered locus">Jann_0211</name>
</gene>
<comment type="function">
    <text evidence="1">Participates actively in the response to hyperosmotic and heat shock by preventing the aggregation of stress-denatured proteins and by disaggregating proteins, also in an autonomous, DnaK-independent fashion. Unfolded proteins bind initially to DnaJ; upon interaction with the DnaJ-bound protein, DnaK hydrolyzes its bound ATP, resulting in the formation of a stable complex. GrpE releases ADP from DnaK; ATP binding to DnaK triggers the release of the substrate protein, thus completing the reaction cycle. Several rounds of ATP-dependent interactions between DnaJ, DnaK and GrpE are required for fully efficient folding. Also involved, together with DnaK and GrpE, in the DNA replication of plasmids through activation of initiation proteins.</text>
</comment>
<comment type="cofactor">
    <cofactor evidence="1">
        <name>Zn(2+)</name>
        <dbReference type="ChEBI" id="CHEBI:29105"/>
    </cofactor>
    <text evidence="1">Binds 2 Zn(2+) ions per monomer.</text>
</comment>
<comment type="subunit">
    <text evidence="1">Homodimer.</text>
</comment>
<comment type="subcellular location">
    <subcellularLocation>
        <location evidence="1">Cytoplasm</location>
    </subcellularLocation>
</comment>
<comment type="domain">
    <text evidence="1">The J domain is necessary and sufficient to stimulate DnaK ATPase activity. Zinc center 1 plays an important role in the autonomous, DnaK-independent chaperone activity of DnaJ. Zinc center 2 is essential for interaction with DnaK and for DnaJ activity.</text>
</comment>
<comment type="similarity">
    <text evidence="1">Belongs to the DnaJ family.</text>
</comment>
<sequence length="385" mass="41093">MAKRDYYEVLGVSKGASADEIKKGFRTKAKELHPDRNADNPEAESQFKEANEAYDVLKDADKKAAYDRFGHAAFDGGMAGGPRGGGGQGQGDFASAFSDVFEDLFGDFMGGQRGRPGGARTQATRGSDLRYNLSITLEDAYNGLSKQITVPSSVACSSCDGTGSEAGAEPTSCPTCSGMGKVRAQQGFFTVERTCPTCNGMGQIVKNPCRTCGGAGRQEKDRALSVNIPAGVETGTRIRLSGEGEAGLRGGPAGDLYIFVEVQDHALFQRDGMDLFCRVPVSMVSAALGGEIEVPSIDGGRSRVRVPEGSQSGRQMRLRGKGMPALRGPGLGEMYIELMVETPVNLTGDQAELLRQFEESCKKTNNPNASGFFDKVKSFWDKVRD</sequence>
<organism>
    <name type="scientific">Jannaschia sp. (strain CCS1)</name>
    <dbReference type="NCBI Taxonomy" id="290400"/>
    <lineage>
        <taxon>Bacteria</taxon>
        <taxon>Pseudomonadati</taxon>
        <taxon>Pseudomonadota</taxon>
        <taxon>Alphaproteobacteria</taxon>
        <taxon>Rhodobacterales</taxon>
        <taxon>Roseobacteraceae</taxon>
        <taxon>Jannaschia</taxon>
    </lineage>
</organism>
<reference key="1">
    <citation type="submission" date="2006-02" db="EMBL/GenBank/DDBJ databases">
        <title>Complete sequence of chromosome of Jannaschia sp. CCS1.</title>
        <authorList>
            <consortium name="US DOE Joint Genome Institute"/>
            <person name="Copeland A."/>
            <person name="Lucas S."/>
            <person name="Lapidus A."/>
            <person name="Barry K."/>
            <person name="Detter J.C."/>
            <person name="Glavina del Rio T."/>
            <person name="Hammon N."/>
            <person name="Israni S."/>
            <person name="Pitluck S."/>
            <person name="Brettin T."/>
            <person name="Bruce D."/>
            <person name="Han C."/>
            <person name="Tapia R."/>
            <person name="Gilna P."/>
            <person name="Chertkov O."/>
            <person name="Saunders E."/>
            <person name="Schmutz J."/>
            <person name="Larimer F."/>
            <person name="Land M."/>
            <person name="Kyrpides N."/>
            <person name="Lykidis A."/>
            <person name="Moran M.A."/>
            <person name="Belas R."/>
            <person name="Ye W."/>
            <person name="Buchan A."/>
            <person name="Gonzalez J.M."/>
            <person name="Schell M.A."/>
            <person name="Richardson P."/>
        </authorList>
    </citation>
    <scope>NUCLEOTIDE SEQUENCE [LARGE SCALE GENOMIC DNA]</scope>
    <source>
        <strain>CCS1</strain>
    </source>
</reference>